<comment type="function">
    <text evidence="3 7">Alpha2 catalytic subunit of the cytosolic type I platelet-activating factor (PAF) acetylhydrolase (PAF-AH (I)) heterotetrameric enzyme that catalyzes the hydrolyze of the acetyl group at the sn-2 position of PAF and its analogs and modulates the action of PAF. The activity and substrate specificity of PAF-AH (I) are affected by its subunit composition. The alpha2/alpha2 homodimer (PAFAH1B2/PAFAH1B2 homodimer) hydrolyzes PAF and 1-O-alkyl-2-acetyl-sn-glycero-3-phosphorylethanolamine (AAGPE) more efficiently than 1-O-alkyl-2-acetyl-sn-glycero-3-phosphoric acid (AAGPA). In contrast, the alpha1/alpha2 heterodimer(PAFAH1B3/PAFAH1B3 heterodimer) hydrolyzes AAGPA more efficiently than PAF, but has little hydrolytic activity towards AAGPE (By similarity). May play a role in male germ cell meiosis during the late pachytenestage and meiotic divisions as well as early spermiogenesis (By similarity).</text>
</comment>
<comment type="catalytic activity">
    <reaction evidence="3">
        <text>a 1-O-alkyl-2-acetyl-sn-glycero-3-phosphocholine + H2O = a 1-O-alkyl-sn-glycero-3-phosphocholine + acetate + H(+)</text>
        <dbReference type="Rhea" id="RHEA:17777"/>
        <dbReference type="ChEBI" id="CHEBI:15377"/>
        <dbReference type="ChEBI" id="CHEBI:15378"/>
        <dbReference type="ChEBI" id="CHEBI:30089"/>
        <dbReference type="ChEBI" id="CHEBI:30909"/>
        <dbReference type="ChEBI" id="CHEBI:36707"/>
        <dbReference type="EC" id="3.1.1.47"/>
    </reaction>
    <physiologicalReaction direction="left-to-right" evidence="3">
        <dbReference type="Rhea" id="RHEA:17778"/>
    </physiologicalReaction>
</comment>
<comment type="catalytic activity">
    <reaction evidence="3">
        <text>1-O-hexadecyl-2-acetyl-sn-glycero-3-phosphocholine + H2O = 1-O-hexadecyl-sn-glycero-3-phosphocholine + acetate + H(+)</text>
        <dbReference type="Rhea" id="RHEA:40479"/>
        <dbReference type="ChEBI" id="CHEBI:15377"/>
        <dbReference type="ChEBI" id="CHEBI:15378"/>
        <dbReference type="ChEBI" id="CHEBI:30089"/>
        <dbReference type="ChEBI" id="CHEBI:44811"/>
        <dbReference type="ChEBI" id="CHEBI:64496"/>
    </reaction>
    <physiologicalReaction direction="left-to-right" evidence="3">
        <dbReference type="Rhea" id="RHEA:40480"/>
    </physiologicalReaction>
</comment>
<comment type="catalytic activity">
    <reaction evidence="3">
        <text>1-O-hexadecyl-2-acetyl-sn-glycero-3-phosphate + H2O = 1-O-hexadecyl-sn-glycero-3-phosphate + acetate + H(+)</text>
        <dbReference type="Rhea" id="RHEA:41704"/>
        <dbReference type="ChEBI" id="CHEBI:15377"/>
        <dbReference type="ChEBI" id="CHEBI:15378"/>
        <dbReference type="ChEBI" id="CHEBI:30089"/>
        <dbReference type="ChEBI" id="CHEBI:77580"/>
        <dbReference type="ChEBI" id="CHEBI:78385"/>
    </reaction>
    <physiologicalReaction direction="left-to-right" evidence="3">
        <dbReference type="Rhea" id="RHEA:41705"/>
    </physiologicalReaction>
</comment>
<comment type="catalytic activity">
    <reaction evidence="3">
        <text>1-O-hexadecyl-2-acetyl-sn-glycero-3-phosphoethanolamine + H2O = 1-O-hexadecyl-sn-glycero-3-phosphoethanolamine + acetate + H(+)</text>
        <dbReference type="Rhea" id="RHEA:41708"/>
        <dbReference type="ChEBI" id="CHEBI:15377"/>
        <dbReference type="ChEBI" id="CHEBI:15378"/>
        <dbReference type="ChEBI" id="CHEBI:30089"/>
        <dbReference type="ChEBI" id="CHEBI:78387"/>
        <dbReference type="ChEBI" id="CHEBI:78390"/>
    </reaction>
    <physiologicalReaction direction="left-to-right" evidence="3">
        <dbReference type="Rhea" id="RHEA:41709"/>
    </physiologicalReaction>
</comment>
<comment type="activity regulation">
    <text evidence="3">Beta subunit (PAFAH1B1) stimulates the acetylhydrolase activity of the alpha2/alpha2 catalytic homodimer.</text>
</comment>
<comment type="subunit">
    <text evidence="3 4 7">Forms a catalytic dimer which is either homodimer (alpha2/alpha2 homodimer) or heterodimer with PAFAH1B3 (alpha2/alpha1 heterodimer). Component of the cytosolic (PAF-AH (I)) heterotetrameric enzyme, which is composed of PAFAH1B1 (beta), PAFAH1B2 (alpha2) and PAFAH1B3 (alpha1) subunits. The catalytic activity of the enzyme resides in the alpha1 (PAFAH1B3) and alpha2 (PAFAH1B2) subunits, whereas the beta subunit (PAFAH1B1) has regulatory activity. Trimer formation is not essential for the catalytic activity (By similarity). Interacts (homodimer form) with PAFAH1B1 (homodimer form); PAFAH1B2 competes with NDEL1 for PAFAH1B1 binding (By similarity). Interacts with VLDLR; this interaction may modulate the Reelin pathway (By similarity).</text>
</comment>
<comment type="subcellular location">
    <subcellularLocation>
        <location evidence="1">Cytoplasm</location>
    </subcellularLocation>
</comment>
<comment type="miscellaneous">
    <text evidence="2 4 5 6">Originally the subunits of the type I platelet-activating factor (PAF) acetylhydrolase was named alpha (PAFAH1B1), beta (PAFAH1B2) and gamma (PAFAH1B3) (By similarity). Now these subunits have been renamed beta (PAFAH1B1), alpha2 (PAFAH1B2) and alpha1 (PAFAH1B3) respectively (By similarity).</text>
</comment>
<comment type="similarity">
    <text evidence="8">Belongs to the 'GDSL' lipolytic enzyme family. Platelet-activating factor acetylhydrolase IB beta/gamma subunits subfamily.</text>
</comment>
<sequence>MSQGDSNPAAIPHAAEDIQGDDRWMSQHNRFVLDCKDKEPDVLFVGDSMVQLMQQYEIWRELFSPLHALNFGIGGDTTRHVLWRLKNGELENIKPKVIVVWVGTNNHENTAEEVAGGIEAIVQLINTRQPQAKIIVLGLLPRGEKPNPLRQKNAKVNQLLKVSLPKLANVQLLDTDGGFVHSDGAISCHDMFDFLHLTGGGYAKICKPLHELIMQLLEETPEEKQTTIA</sequence>
<organism>
    <name type="scientific">Pongo abelii</name>
    <name type="common">Sumatran orangutan</name>
    <name type="synonym">Pongo pygmaeus abelii</name>
    <dbReference type="NCBI Taxonomy" id="9601"/>
    <lineage>
        <taxon>Eukaryota</taxon>
        <taxon>Metazoa</taxon>
        <taxon>Chordata</taxon>
        <taxon>Craniata</taxon>
        <taxon>Vertebrata</taxon>
        <taxon>Euteleostomi</taxon>
        <taxon>Mammalia</taxon>
        <taxon>Eutheria</taxon>
        <taxon>Euarchontoglires</taxon>
        <taxon>Primates</taxon>
        <taxon>Haplorrhini</taxon>
        <taxon>Catarrhini</taxon>
        <taxon>Hominidae</taxon>
        <taxon>Pongo</taxon>
    </lineage>
</organism>
<reference key="1">
    <citation type="submission" date="2004-11" db="EMBL/GenBank/DDBJ databases">
        <authorList>
            <consortium name="The German cDNA consortium"/>
        </authorList>
    </citation>
    <scope>NUCLEOTIDE SEQUENCE [LARGE SCALE MRNA]</scope>
    <source>
        <tissue>Brain cortex</tissue>
    </source>
</reference>
<proteinExistence type="evidence at transcript level"/>
<name>PA1B2_PONAB</name>
<protein>
    <recommendedName>
        <fullName evidence="3">Platelet-activating factor acetylhydrolase IB subunit alpha2</fullName>
        <ecNumber evidence="3">3.1.1.47</ecNumber>
    </recommendedName>
    <alternativeName>
        <fullName>PAF acetylhydrolase 30 kDa subunit</fullName>
        <shortName>PAF-AH 30 kDa subunit</shortName>
    </alternativeName>
    <alternativeName>
        <fullName>PAF-AH subunit beta</fullName>
        <shortName>PAFAH subunit beta</shortName>
    </alternativeName>
</protein>
<keyword id="KW-0007">Acetylation</keyword>
<keyword id="KW-0963">Cytoplasm</keyword>
<keyword id="KW-0378">Hydrolase</keyword>
<keyword id="KW-0442">Lipid degradation</keyword>
<keyword id="KW-0443">Lipid metabolism</keyword>
<keyword id="KW-0597">Phosphoprotein</keyword>
<keyword id="KW-1185">Reference proteome</keyword>
<gene>
    <name evidence="4" type="primary">PAFAH1B2</name>
    <name type="synonym">PAFAHB</name>
</gene>
<dbReference type="EC" id="3.1.1.47" evidence="3"/>
<dbReference type="EMBL" id="CR861287">
    <property type="protein sequence ID" value="CAH93354.1"/>
    <property type="molecule type" value="mRNA"/>
</dbReference>
<dbReference type="RefSeq" id="NP_001126974.1">
    <property type="nucleotide sequence ID" value="NM_001133502.1"/>
</dbReference>
<dbReference type="SMR" id="Q5R4G2"/>
<dbReference type="FunCoup" id="Q5R4G2">
    <property type="interactions" value="3374"/>
</dbReference>
<dbReference type="STRING" id="9601.ENSPPYP00000023693"/>
<dbReference type="Ensembl" id="ENSPPYT00000004652.2">
    <property type="protein sequence ID" value="ENSPPYP00000004476.1"/>
    <property type="gene ID" value="ENSPPYG00000003907.3"/>
</dbReference>
<dbReference type="GeneID" id="100173993"/>
<dbReference type="KEGG" id="pon:100173993"/>
<dbReference type="CTD" id="5049"/>
<dbReference type="eggNOG" id="KOG1388">
    <property type="taxonomic scope" value="Eukaryota"/>
</dbReference>
<dbReference type="GeneTree" id="ENSGT00950000183199"/>
<dbReference type="HOGENOM" id="CLU_051989_2_0_1"/>
<dbReference type="InParanoid" id="Q5R4G2"/>
<dbReference type="OMA" id="AWNQYFA"/>
<dbReference type="OrthoDB" id="505607at2759"/>
<dbReference type="Proteomes" id="UP000001595">
    <property type="component" value="Chromosome 11"/>
</dbReference>
<dbReference type="GO" id="GO:0008247">
    <property type="term" value="C:1-alkyl-2-acetylglycerophosphocholine esterase complex"/>
    <property type="evidence" value="ECO:0000250"/>
    <property type="project" value="UniProtKB"/>
</dbReference>
<dbReference type="GO" id="GO:0005829">
    <property type="term" value="C:cytosol"/>
    <property type="evidence" value="ECO:0007669"/>
    <property type="project" value="Ensembl"/>
</dbReference>
<dbReference type="GO" id="GO:0001650">
    <property type="term" value="C:fibrillar center"/>
    <property type="evidence" value="ECO:0007669"/>
    <property type="project" value="Ensembl"/>
</dbReference>
<dbReference type="GO" id="GO:0005886">
    <property type="term" value="C:plasma membrane"/>
    <property type="evidence" value="ECO:0007669"/>
    <property type="project" value="Ensembl"/>
</dbReference>
<dbReference type="GO" id="GO:0003847">
    <property type="term" value="F:1-alkyl-2-acetylglycerophosphocholine esterase activity"/>
    <property type="evidence" value="ECO:0000250"/>
    <property type="project" value="UniProtKB"/>
</dbReference>
<dbReference type="GO" id="GO:0047179">
    <property type="term" value="F:platelet-activating factor acetyltransferase activity"/>
    <property type="evidence" value="ECO:0007669"/>
    <property type="project" value="TreeGrafter"/>
</dbReference>
<dbReference type="GO" id="GO:0046982">
    <property type="term" value="F:protein heterodimerization activity"/>
    <property type="evidence" value="ECO:0000250"/>
    <property type="project" value="UniProtKB"/>
</dbReference>
<dbReference type="GO" id="GO:0042803">
    <property type="term" value="F:protein homodimerization activity"/>
    <property type="evidence" value="ECO:0000250"/>
    <property type="project" value="UniProtKB"/>
</dbReference>
<dbReference type="GO" id="GO:0016042">
    <property type="term" value="P:lipid catabolic process"/>
    <property type="evidence" value="ECO:0007669"/>
    <property type="project" value="UniProtKB-KW"/>
</dbReference>
<dbReference type="GO" id="GO:0016239">
    <property type="term" value="P:positive regulation of macroautophagy"/>
    <property type="evidence" value="ECO:0007669"/>
    <property type="project" value="Ensembl"/>
</dbReference>
<dbReference type="GO" id="GO:0007283">
    <property type="term" value="P:spermatogenesis"/>
    <property type="evidence" value="ECO:0000250"/>
    <property type="project" value="UniProtKB"/>
</dbReference>
<dbReference type="CDD" id="cd01820">
    <property type="entry name" value="PAF_acetylesterase_like"/>
    <property type="match status" value="1"/>
</dbReference>
<dbReference type="FunFam" id="3.40.50.1110:FF:000004">
    <property type="entry name" value="Platelet-activating factor acetylhydrolase IB subunit beta"/>
    <property type="match status" value="1"/>
</dbReference>
<dbReference type="Gene3D" id="3.40.50.1110">
    <property type="entry name" value="SGNH hydrolase"/>
    <property type="match status" value="1"/>
</dbReference>
<dbReference type="InterPro" id="IPR013830">
    <property type="entry name" value="SGNH_hydro"/>
</dbReference>
<dbReference type="InterPro" id="IPR036514">
    <property type="entry name" value="SGNH_hydro_sf"/>
</dbReference>
<dbReference type="PANTHER" id="PTHR11852">
    <property type="entry name" value="PLATELET-ACTIVATING FACTOR ACETYLHYDROLASE"/>
    <property type="match status" value="1"/>
</dbReference>
<dbReference type="PANTHER" id="PTHR11852:SF1">
    <property type="entry name" value="PLATELET-ACTIVATING FACTOR ACETYLHYDROLASE IB SUBUNIT ALPHA2"/>
    <property type="match status" value="1"/>
</dbReference>
<dbReference type="Pfam" id="PF13472">
    <property type="entry name" value="Lipase_GDSL_2"/>
    <property type="match status" value="1"/>
</dbReference>
<dbReference type="SUPFAM" id="SSF52266">
    <property type="entry name" value="SGNH hydrolase"/>
    <property type="match status" value="1"/>
</dbReference>
<accession>Q5R4G2</accession>
<evidence type="ECO:0000250" key="1"/>
<evidence type="ECO:0000250" key="2">
    <source>
        <dbReference type="UniProtKB" id="P43034"/>
    </source>
</evidence>
<evidence type="ECO:0000250" key="3">
    <source>
        <dbReference type="UniProtKB" id="P68401"/>
    </source>
</evidence>
<evidence type="ECO:0000250" key="4">
    <source>
        <dbReference type="UniProtKB" id="P68402"/>
    </source>
</evidence>
<evidence type="ECO:0000250" key="5">
    <source>
        <dbReference type="UniProtKB" id="Q15102"/>
    </source>
</evidence>
<evidence type="ECO:0000250" key="6">
    <source>
        <dbReference type="UniProtKB" id="Q29460"/>
    </source>
</evidence>
<evidence type="ECO:0000250" key="7">
    <source>
        <dbReference type="UniProtKB" id="Q61206"/>
    </source>
</evidence>
<evidence type="ECO:0000305" key="8"/>
<feature type="initiator methionine" description="Removed" evidence="4">
    <location>
        <position position="1"/>
    </location>
</feature>
<feature type="chain" id="PRO_0000252683" description="Platelet-activating factor acetylhydrolase IB subunit alpha2">
    <location>
        <begin position="2"/>
        <end position="229"/>
    </location>
</feature>
<feature type="active site" evidence="1">
    <location>
        <position position="48"/>
    </location>
</feature>
<feature type="active site" evidence="1">
    <location>
        <position position="193"/>
    </location>
</feature>
<feature type="active site" evidence="1">
    <location>
        <position position="196"/>
    </location>
</feature>
<feature type="modified residue" description="N-acetylserine" evidence="4">
    <location>
        <position position="2"/>
    </location>
</feature>
<feature type="modified residue" description="Phosphoserine" evidence="4">
    <location>
        <position position="2"/>
    </location>
</feature>
<feature type="modified residue" description="Phosphoserine" evidence="4">
    <location>
        <position position="64"/>
    </location>
</feature>
<feature type="modified residue" description="Phosphothreonine" evidence="7">
    <location>
        <position position="220"/>
    </location>
</feature>